<gene>
    <name type="ordered locus">BSUIS_A1532</name>
</gene>
<organism>
    <name type="scientific">Brucella suis (strain ATCC 23445 / NCTC 10510)</name>
    <dbReference type="NCBI Taxonomy" id="470137"/>
    <lineage>
        <taxon>Bacteria</taxon>
        <taxon>Pseudomonadati</taxon>
        <taxon>Pseudomonadota</taxon>
        <taxon>Alphaproteobacteria</taxon>
        <taxon>Hyphomicrobiales</taxon>
        <taxon>Brucellaceae</taxon>
        <taxon>Brucella/Ochrobactrum group</taxon>
        <taxon>Brucella</taxon>
    </lineage>
</organism>
<reference key="1">
    <citation type="submission" date="2007-12" db="EMBL/GenBank/DDBJ databases">
        <title>Brucella suis ATCC 23445 whole genome shotgun sequencing project.</title>
        <authorList>
            <person name="Setubal J.C."/>
            <person name="Bowns C."/>
            <person name="Boyle S."/>
            <person name="Crasta O.R."/>
            <person name="Czar M.J."/>
            <person name="Dharmanolla C."/>
            <person name="Gillespie J.J."/>
            <person name="Kenyon R.W."/>
            <person name="Lu J."/>
            <person name="Mane S."/>
            <person name="Mohapatra S."/>
            <person name="Nagrani S."/>
            <person name="Purkayastha A."/>
            <person name="Rajasimha H.K."/>
            <person name="Shallom J.M."/>
            <person name="Shallom S."/>
            <person name="Shukla M."/>
            <person name="Snyder E.E."/>
            <person name="Sobral B.W."/>
            <person name="Wattam A.R."/>
            <person name="Will R."/>
            <person name="Williams K."/>
            <person name="Yoo H."/>
            <person name="Bruce D."/>
            <person name="Detter C."/>
            <person name="Munk C."/>
            <person name="Brettin T.S."/>
        </authorList>
    </citation>
    <scope>NUCLEOTIDE SEQUENCE [LARGE SCALE GENOMIC DNA]</scope>
    <source>
        <strain>ATCC 23445 / NCTC 10510</strain>
    </source>
</reference>
<sequence length="152" mass="17503">MTDKPFWQTKNLNQLTRSEWESLCDGCGQCCLHKLQDEDTDEIYWTSVACTLLNPETCQCRDYPNRKKTVPDCVFLTPEIVDEVDWLPVTCAYRLVAEGSDLYWWHPLVSGSPETVHEAGISVRGKVTAFDHDMQDDDDYLDHMVTPDKIAR</sequence>
<dbReference type="EMBL" id="CP000911">
    <property type="protein sequence ID" value="ABY38564.1"/>
    <property type="molecule type" value="Genomic_DNA"/>
</dbReference>
<dbReference type="RefSeq" id="WP_004688573.1">
    <property type="nucleotide sequence ID" value="NC_010169.1"/>
</dbReference>
<dbReference type="KEGG" id="bmt:BSUIS_A1532"/>
<dbReference type="HOGENOM" id="CLU_109769_0_1_5"/>
<dbReference type="Proteomes" id="UP000008545">
    <property type="component" value="Chromosome I"/>
</dbReference>
<dbReference type="HAMAP" id="MF_00676">
    <property type="entry name" value="UPF0260"/>
    <property type="match status" value="1"/>
</dbReference>
<dbReference type="InterPro" id="IPR005358">
    <property type="entry name" value="Puta_zinc/iron-chelating_dom"/>
</dbReference>
<dbReference type="InterPro" id="IPR008228">
    <property type="entry name" value="UCP006173"/>
</dbReference>
<dbReference type="NCBIfam" id="NF003501">
    <property type="entry name" value="PRK05170.1-5"/>
    <property type="match status" value="1"/>
</dbReference>
<dbReference type="NCBIfam" id="NF003507">
    <property type="entry name" value="PRK05170.2-5"/>
    <property type="match status" value="1"/>
</dbReference>
<dbReference type="PANTHER" id="PTHR37421">
    <property type="entry name" value="UPF0260 PROTEIN YCGN"/>
    <property type="match status" value="1"/>
</dbReference>
<dbReference type="PANTHER" id="PTHR37421:SF1">
    <property type="entry name" value="UPF0260 PROTEIN YCGN"/>
    <property type="match status" value="1"/>
</dbReference>
<dbReference type="Pfam" id="PF03692">
    <property type="entry name" value="CxxCxxCC"/>
    <property type="match status" value="1"/>
</dbReference>
<dbReference type="PIRSF" id="PIRSF006173">
    <property type="entry name" value="UCP006173"/>
    <property type="match status" value="1"/>
</dbReference>
<comment type="similarity">
    <text evidence="1">Belongs to the UPF0260 family.</text>
</comment>
<feature type="chain" id="PRO_1000082968" description="UPF0260 protein BSUIS_A1532">
    <location>
        <begin position="1"/>
        <end position="152"/>
    </location>
</feature>
<name>Y1532_BRUSI</name>
<accession>B0CHR3</accession>
<proteinExistence type="inferred from homology"/>
<protein>
    <recommendedName>
        <fullName evidence="1">UPF0260 protein BSUIS_A1532</fullName>
    </recommendedName>
</protein>
<evidence type="ECO:0000255" key="1">
    <source>
        <dbReference type="HAMAP-Rule" id="MF_00676"/>
    </source>
</evidence>